<protein>
    <recommendedName>
        <fullName>Cytochrome b6-f complex subunit 8</fullName>
    </recommendedName>
    <alternativeName>
        <fullName>Cytochrome b6-f complex subunit PetN</fullName>
    </alternativeName>
    <alternativeName>
        <fullName>Cytochrome b6-f complex subunit VIII</fullName>
    </alternativeName>
</protein>
<gene>
    <name type="primary">petN</name>
    <name type="ordered locus">gsl3700</name>
</gene>
<dbReference type="EMBL" id="BA000045">
    <property type="protein sequence ID" value="BAC91641.1"/>
    <property type="molecule type" value="Genomic_DNA"/>
</dbReference>
<dbReference type="RefSeq" id="NP_926646.1">
    <property type="nucleotide sequence ID" value="NC_005125.1"/>
</dbReference>
<dbReference type="RefSeq" id="WP_011143689.1">
    <property type="nucleotide sequence ID" value="NC_005125.1"/>
</dbReference>
<dbReference type="SMR" id="Q7NF27"/>
<dbReference type="STRING" id="251221.gene:10761216"/>
<dbReference type="EnsemblBacteria" id="BAC91641">
    <property type="protein sequence ID" value="BAC91641"/>
    <property type="gene ID" value="BAC91641"/>
</dbReference>
<dbReference type="KEGG" id="gvi:gsl3700"/>
<dbReference type="HOGENOM" id="CLU_215774_1_0_3"/>
<dbReference type="InParanoid" id="Q7NF27"/>
<dbReference type="Proteomes" id="UP000000557">
    <property type="component" value="Chromosome"/>
</dbReference>
<dbReference type="GO" id="GO:0009512">
    <property type="term" value="C:cytochrome b6f complex"/>
    <property type="evidence" value="ECO:0007669"/>
    <property type="project" value="InterPro"/>
</dbReference>
<dbReference type="GO" id="GO:0005886">
    <property type="term" value="C:plasma membrane"/>
    <property type="evidence" value="ECO:0007669"/>
    <property type="project" value="UniProtKB-SubCell"/>
</dbReference>
<dbReference type="GO" id="GO:0045158">
    <property type="term" value="F:electron transporter, transferring electrons within cytochrome b6/f complex of photosystem II activity"/>
    <property type="evidence" value="ECO:0007669"/>
    <property type="project" value="InterPro"/>
</dbReference>
<dbReference type="GO" id="GO:0017004">
    <property type="term" value="P:cytochrome complex assembly"/>
    <property type="evidence" value="ECO:0007669"/>
    <property type="project" value="UniProtKB-UniRule"/>
</dbReference>
<dbReference type="HAMAP" id="MF_00395">
    <property type="entry name" value="Cytb6_f_PetN"/>
    <property type="match status" value="1"/>
</dbReference>
<dbReference type="InterPro" id="IPR036143">
    <property type="entry name" value="Cytochr_b6-f_cplx_su8_sf"/>
</dbReference>
<dbReference type="InterPro" id="IPR005497">
    <property type="entry name" value="Cytochrome_b6-f_cplx_su8"/>
</dbReference>
<dbReference type="Pfam" id="PF03742">
    <property type="entry name" value="PetN"/>
    <property type="match status" value="1"/>
</dbReference>
<dbReference type="SUPFAM" id="SSF103451">
    <property type="entry name" value="PetN subunit of the cytochrome b6f complex"/>
    <property type="match status" value="1"/>
</dbReference>
<accession>Q7NF27</accession>
<sequence length="28" mass="3080">MDPTVGWIALLAFFVVSIALVVWGRNGF</sequence>
<reference key="1">
    <citation type="journal article" date="2003" name="DNA Res.">
        <title>Complete genome structure of Gloeobacter violaceus PCC 7421, a cyanobacterium that lacks thylakoids.</title>
        <authorList>
            <person name="Nakamura Y."/>
            <person name="Kaneko T."/>
            <person name="Sato S."/>
            <person name="Mimuro M."/>
            <person name="Miyashita H."/>
            <person name="Tsuchiya T."/>
            <person name="Sasamoto S."/>
            <person name="Watanabe A."/>
            <person name="Kawashima K."/>
            <person name="Kishida Y."/>
            <person name="Kiyokawa C."/>
            <person name="Kohara M."/>
            <person name="Matsumoto M."/>
            <person name="Matsuno A."/>
            <person name="Nakazaki N."/>
            <person name="Shimpo S."/>
            <person name="Takeuchi C."/>
            <person name="Yamada M."/>
            <person name="Tabata S."/>
        </authorList>
    </citation>
    <scope>NUCLEOTIDE SEQUENCE [LARGE SCALE GENOMIC DNA]</scope>
    <source>
        <strain>ATCC 29082 / PCC 7421</strain>
    </source>
</reference>
<keyword id="KW-0997">Cell inner membrane</keyword>
<keyword id="KW-1003">Cell membrane</keyword>
<keyword id="KW-0249">Electron transport</keyword>
<keyword id="KW-0472">Membrane</keyword>
<keyword id="KW-1185">Reference proteome</keyword>
<keyword id="KW-0812">Transmembrane</keyword>
<keyword id="KW-1133">Transmembrane helix</keyword>
<keyword id="KW-0813">Transport</keyword>
<organism>
    <name type="scientific">Gloeobacter violaceus (strain ATCC 29082 / PCC 7421)</name>
    <dbReference type="NCBI Taxonomy" id="251221"/>
    <lineage>
        <taxon>Bacteria</taxon>
        <taxon>Bacillati</taxon>
        <taxon>Cyanobacteriota</taxon>
        <taxon>Cyanophyceae</taxon>
        <taxon>Gloeobacterales</taxon>
        <taxon>Gloeobacteraceae</taxon>
        <taxon>Gloeobacter</taxon>
    </lineage>
</organism>
<comment type="function">
    <text evidence="1">Component of the cytochrome b6-f complex, which mediates electron transfer between photosystem II (PSII) and photosystem I (PSI), cyclic electron flow around PSI, and state transitions.</text>
</comment>
<comment type="subunit">
    <text evidence="1">The 4 large subunits of the cytochrome b6-f complex are cytochrome b6, subunit IV (17 kDa polypeptide, PetD), cytochrome f and the Rieske protein, while the 4 small subunits are PetG, PetL, PetM and PetN. The complex functions as a dimer (By similarity).</text>
</comment>
<comment type="subcellular location">
    <subcellularLocation>
        <location evidence="1">Cell inner membrane</location>
        <topology evidence="1">Single-pass membrane protein</topology>
    </subcellularLocation>
</comment>
<comment type="similarity">
    <text evidence="3">Belongs to the PetN family.</text>
</comment>
<feature type="chain" id="PRO_0000217136" description="Cytochrome b6-f complex subunit 8">
    <location>
        <begin position="1"/>
        <end position="28"/>
    </location>
</feature>
<feature type="transmembrane region" description="Helical" evidence="2">
    <location>
        <begin position="2"/>
        <end position="22"/>
    </location>
</feature>
<name>PETN_GLOVI</name>
<proteinExistence type="inferred from homology"/>
<evidence type="ECO:0000250" key="1"/>
<evidence type="ECO:0000255" key="2"/>
<evidence type="ECO:0000305" key="3"/>